<accession>B0BV81</accession>
<gene>
    <name evidence="1" type="primary">rpmF</name>
    <name type="ordered locus">RrIowa_1408</name>
</gene>
<proteinExistence type="inferred from homology"/>
<sequence>MAVPKKKTSKSRRNMRRSHLALGKVNVIVDSQTGEYKLPHHVSLVDGTYNNRLVVTKKIKTEEEVA</sequence>
<evidence type="ECO:0000255" key="1">
    <source>
        <dbReference type="HAMAP-Rule" id="MF_00340"/>
    </source>
</evidence>
<evidence type="ECO:0000305" key="2"/>
<feature type="chain" id="PRO_1000079341" description="Large ribosomal subunit protein bL32">
    <location>
        <begin position="1"/>
        <end position="66"/>
    </location>
</feature>
<name>RL32_RICRO</name>
<reference key="1">
    <citation type="journal article" date="2008" name="Infect. Immun.">
        <title>Genomic comparison of virulent Rickettsia rickettsii Sheila Smith and avirulent Rickettsia rickettsii Iowa.</title>
        <authorList>
            <person name="Ellison D.W."/>
            <person name="Clark T.R."/>
            <person name="Sturdevant D.E."/>
            <person name="Virtaneva K."/>
            <person name="Porcella S.F."/>
            <person name="Hackstadt T."/>
        </authorList>
    </citation>
    <scope>NUCLEOTIDE SEQUENCE [LARGE SCALE GENOMIC DNA]</scope>
    <source>
        <strain>Iowa</strain>
    </source>
</reference>
<protein>
    <recommendedName>
        <fullName evidence="1">Large ribosomal subunit protein bL32</fullName>
    </recommendedName>
    <alternativeName>
        <fullName evidence="2">50S ribosomal protein L32</fullName>
    </alternativeName>
</protein>
<organism>
    <name type="scientific">Rickettsia rickettsii (strain Iowa)</name>
    <dbReference type="NCBI Taxonomy" id="452659"/>
    <lineage>
        <taxon>Bacteria</taxon>
        <taxon>Pseudomonadati</taxon>
        <taxon>Pseudomonadota</taxon>
        <taxon>Alphaproteobacteria</taxon>
        <taxon>Rickettsiales</taxon>
        <taxon>Rickettsiaceae</taxon>
        <taxon>Rickettsieae</taxon>
        <taxon>Rickettsia</taxon>
        <taxon>spotted fever group</taxon>
    </lineage>
</organism>
<dbReference type="EMBL" id="CP000766">
    <property type="protein sequence ID" value="ABY73141.1"/>
    <property type="molecule type" value="Genomic_DNA"/>
</dbReference>
<dbReference type="RefSeq" id="WP_004997395.1">
    <property type="nucleotide sequence ID" value="NC_010263.3"/>
</dbReference>
<dbReference type="SMR" id="B0BV81"/>
<dbReference type="GeneID" id="95361611"/>
<dbReference type="KEGG" id="rrj:RrIowa_1408"/>
<dbReference type="eggNOG" id="COG0333">
    <property type="taxonomic scope" value="Bacteria"/>
</dbReference>
<dbReference type="HOGENOM" id="CLU_129084_2_0_5"/>
<dbReference type="Proteomes" id="UP000000796">
    <property type="component" value="Chromosome"/>
</dbReference>
<dbReference type="GO" id="GO:0015934">
    <property type="term" value="C:large ribosomal subunit"/>
    <property type="evidence" value="ECO:0007669"/>
    <property type="project" value="InterPro"/>
</dbReference>
<dbReference type="GO" id="GO:0003735">
    <property type="term" value="F:structural constituent of ribosome"/>
    <property type="evidence" value="ECO:0007669"/>
    <property type="project" value="InterPro"/>
</dbReference>
<dbReference type="GO" id="GO:0006412">
    <property type="term" value="P:translation"/>
    <property type="evidence" value="ECO:0007669"/>
    <property type="project" value="UniProtKB-UniRule"/>
</dbReference>
<dbReference type="Gene3D" id="1.20.5.640">
    <property type="entry name" value="Single helix bin"/>
    <property type="match status" value="1"/>
</dbReference>
<dbReference type="HAMAP" id="MF_00340">
    <property type="entry name" value="Ribosomal_bL32"/>
    <property type="match status" value="1"/>
</dbReference>
<dbReference type="InterPro" id="IPR002677">
    <property type="entry name" value="Ribosomal_bL32"/>
</dbReference>
<dbReference type="InterPro" id="IPR044957">
    <property type="entry name" value="Ribosomal_bL32_bact"/>
</dbReference>
<dbReference type="InterPro" id="IPR011332">
    <property type="entry name" value="Ribosomal_zn-bd"/>
</dbReference>
<dbReference type="NCBIfam" id="TIGR01031">
    <property type="entry name" value="rpmF_bact"/>
    <property type="match status" value="1"/>
</dbReference>
<dbReference type="PANTHER" id="PTHR35534">
    <property type="entry name" value="50S RIBOSOMAL PROTEIN L32"/>
    <property type="match status" value="1"/>
</dbReference>
<dbReference type="PANTHER" id="PTHR35534:SF1">
    <property type="entry name" value="LARGE RIBOSOMAL SUBUNIT PROTEIN BL32"/>
    <property type="match status" value="1"/>
</dbReference>
<dbReference type="Pfam" id="PF01783">
    <property type="entry name" value="Ribosomal_L32p"/>
    <property type="match status" value="1"/>
</dbReference>
<dbReference type="SUPFAM" id="SSF57829">
    <property type="entry name" value="Zn-binding ribosomal proteins"/>
    <property type="match status" value="1"/>
</dbReference>
<comment type="similarity">
    <text evidence="1">Belongs to the bacterial ribosomal protein bL32 family.</text>
</comment>
<keyword id="KW-0687">Ribonucleoprotein</keyword>
<keyword id="KW-0689">Ribosomal protein</keyword>